<protein>
    <recommendedName>
        <fullName>Uracil phosphoribosyltransferase</fullName>
        <shortName>UPRTase</shortName>
        <ecNumber>2.4.2.9</ecNumber>
    </recommendedName>
    <alternativeName>
        <fullName>UMP pyrophosphorylase</fullName>
    </alternativeName>
</protein>
<organism>
    <name type="scientific">Dictyostelium discoideum</name>
    <name type="common">Social amoeba</name>
    <dbReference type="NCBI Taxonomy" id="44689"/>
    <lineage>
        <taxon>Eukaryota</taxon>
        <taxon>Amoebozoa</taxon>
        <taxon>Evosea</taxon>
        <taxon>Eumycetozoa</taxon>
        <taxon>Dictyostelia</taxon>
        <taxon>Dictyosteliales</taxon>
        <taxon>Dictyosteliaceae</taxon>
        <taxon>Dictyostelium</taxon>
    </lineage>
</organism>
<sequence>MSYPENVVVLKSNHQLKGLFTIIRNRETKREDFIFYSDRIIRLLIEEGLYCLPFHETTITTPTGCEYQGVTFASKICGVSIVRAGESMEAGLRAVCKHIKIGKILIQRDEETALPKLLYAKLPHDIANRQVLLLDPMLATGGTVTQAVEVLLERGVKEENIVFINLVASPEGIKVFTDKYPRVKVVTGEIDSHLNEKKYIIPGLGDFGNLYFGTED</sequence>
<comment type="function">
    <text evidence="1">Catalyzes the conversion of uracil and 5-phospho-alpha-D-ribose 1-diphosphate (PRPP) to UMP and diphosphate.</text>
</comment>
<comment type="catalytic activity">
    <reaction>
        <text>UMP + diphosphate = 5-phospho-alpha-D-ribose 1-diphosphate + uracil</text>
        <dbReference type="Rhea" id="RHEA:13017"/>
        <dbReference type="ChEBI" id="CHEBI:17568"/>
        <dbReference type="ChEBI" id="CHEBI:33019"/>
        <dbReference type="ChEBI" id="CHEBI:57865"/>
        <dbReference type="ChEBI" id="CHEBI:58017"/>
        <dbReference type="EC" id="2.4.2.9"/>
    </reaction>
</comment>
<comment type="cofactor">
    <cofactor evidence="1">
        <name>Mg(2+)</name>
        <dbReference type="ChEBI" id="CHEBI:18420"/>
    </cofactor>
    <text evidence="1">Binds 1 Mg(2+) ion per subunit. The magnesium is bound as Mg-PRPP.</text>
</comment>
<comment type="activity regulation">
    <text evidence="1">Allosterically activated by GTP.</text>
</comment>
<comment type="pathway">
    <text>Pyrimidine metabolism; UMP biosynthesis via salvage pathway; UMP from uracil: step 1/1.</text>
</comment>
<comment type="similarity">
    <text evidence="3">Belongs to the UPRTase family.</text>
</comment>
<feature type="chain" id="PRO_0000327732" description="Uracil phosphoribosyltransferase">
    <location>
        <begin position="1"/>
        <end position="216"/>
    </location>
</feature>
<feature type="binding site" evidence="2">
    <location>
        <position position="30"/>
    </location>
    <ligand>
        <name>GTP</name>
        <dbReference type="ChEBI" id="CHEBI:37565"/>
    </ligand>
</feature>
<feature type="binding site" evidence="2">
    <location>
        <position position="39"/>
    </location>
    <ligand>
        <name>GTP</name>
        <dbReference type="ChEBI" id="CHEBI:37565"/>
    </ligand>
</feature>
<feature type="binding site" evidence="2">
    <location>
        <begin position="73"/>
        <end position="76"/>
    </location>
    <ligand>
        <name>GTP</name>
        <dbReference type="ChEBI" id="CHEBI:37565"/>
    </ligand>
</feature>
<feature type="binding site" evidence="1">
    <location>
        <position position="75"/>
    </location>
    <ligand>
        <name>GTP</name>
        <dbReference type="ChEBI" id="CHEBI:37565"/>
    </ligand>
</feature>
<feature type="binding site" evidence="2">
    <location>
        <position position="83"/>
    </location>
    <ligand>
        <name>5-phospho-alpha-D-ribose 1-diphosphate</name>
        <dbReference type="ChEBI" id="CHEBI:58017"/>
    </ligand>
</feature>
<feature type="binding site" evidence="1">
    <location>
        <position position="100"/>
    </location>
    <ligand>
        <name>GTP</name>
        <dbReference type="ChEBI" id="CHEBI:37565"/>
    </ligand>
</feature>
<feature type="binding site" evidence="2">
    <location>
        <position position="108"/>
    </location>
    <ligand>
        <name>5-phospho-alpha-D-ribose 1-diphosphate</name>
        <dbReference type="ChEBI" id="CHEBI:58017"/>
    </ligand>
</feature>
<feature type="binding site" evidence="2">
    <location>
        <position position="129"/>
    </location>
    <ligand>
        <name>GTP</name>
        <dbReference type="ChEBI" id="CHEBI:37565"/>
    </ligand>
</feature>
<feature type="binding site" evidence="2">
    <location>
        <begin position="135"/>
        <end position="143"/>
    </location>
    <ligand>
        <name>5-phospho-alpha-D-ribose 1-diphosphate</name>
        <dbReference type="ChEBI" id="CHEBI:58017"/>
    </ligand>
</feature>
<feature type="binding site" evidence="2">
    <location>
        <position position="135"/>
    </location>
    <ligand>
        <name>5-phospho-alpha-D-ribose 1-diphosphate</name>
        <dbReference type="ChEBI" id="CHEBI:58017"/>
    </ligand>
</feature>
<feature type="binding site" evidence="1">
    <location>
        <position position="199"/>
    </location>
    <ligand>
        <name>D-ribose 5-phosphate</name>
        <dbReference type="ChEBI" id="CHEBI:78346"/>
    </ligand>
</feature>
<feature type="binding site" evidence="2">
    <location>
        <position position="200"/>
    </location>
    <ligand>
        <name>uracil</name>
        <dbReference type="ChEBI" id="CHEBI:17568"/>
    </ligand>
</feature>
<feature type="binding site" evidence="2">
    <location>
        <begin position="205"/>
        <end position="207"/>
    </location>
    <ligand>
        <name>uracil</name>
        <dbReference type="ChEBI" id="CHEBI:17568"/>
    </ligand>
</feature>
<feature type="binding site" evidence="2">
    <location>
        <position position="206"/>
    </location>
    <ligand>
        <name>5-phospho-alpha-D-ribose 1-diphosphate</name>
        <dbReference type="ChEBI" id="CHEBI:58017"/>
    </ligand>
</feature>
<accession>Q55GQ6</accession>
<name>UPP_DICDI</name>
<proteinExistence type="inferred from homology"/>
<keyword id="KW-0021">Allosteric enzyme</keyword>
<keyword id="KW-0328">Glycosyltransferase</keyword>
<keyword id="KW-0342">GTP-binding</keyword>
<keyword id="KW-0547">Nucleotide-binding</keyword>
<keyword id="KW-1185">Reference proteome</keyword>
<keyword id="KW-0808">Transferase</keyword>
<reference key="1">
    <citation type="journal article" date="2005" name="Nature">
        <title>The genome of the social amoeba Dictyostelium discoideum.</title>
        <authorList>
            <person name="Eichinger L."/>
            <person name="Pachebat J.A."/>
            <person name="Gloeckner G."/>
            <person name="Rajandream M.A."/>
            <person name="Sucgang R."/>
            <person name="Berriman M."/>
            <person name="Song J."/>
            <person name="Olsen R."/>
            <person name="Szafranski K."/>
            <person name="Xu Q."/>
            <person name="Tunggal B."/>
            <person name="Kummerfeld S."/>
            <person name="Madera M."/>
            <person name="Konfortov B.A."/>
            <person name="Rivero F."/>
            <person name="Bankier A.T."/>
            <person name="Lehmann R."/>
            <person name="Hamlin N."/>
            <person name="Davies R."/>
            <person name="Gaudet P."/>
            <person name="Fey P."/>
            <person name="Pilcher K."/>
            <person name="Chen G."/>
            <person name="Saunders D."/>
            <person name="Sodergren E.J."/>
            <person name="Davis P."/>
            <person name="Kerhornou A."/>
            <person name="Nie X."/>
            <person name="Hall N."/>
            <person name="Anjard C."/>
            <person name="Hemphill L."/>
            <person name="Bason N."/>
            <person name="Farbrother P."/>
            <person name="Desany B."/>
            <person name="Just E."/>
            <person name="Morio T."/>
            <person name="Rost R."/>
            <person name="Churcher C.M."/>
            <person name="Cooper J."/>
            <person name="Haydock S."/>
            <person name="van Driessche N."/>
            <person name="Cronin A."/>
            <person name="Goodhead I."/>
            <person name="Muzny D.M."/>
            <person name="Mourier T."/>
            <person name="Pain A."/>
            <person name="Lu M."/>
            <person name="Harper D."/>
            <person name="Lindsay R."/>
            <person name="Hauser H."/>
            <person name="James K.D."/>
            <person name="Quiles M."/>
            <person name="Madan Babu M."/>
            <person name="Saito T."/>
            <person name="Buchrieser C."/>
            <person name="Wardroper A."/>
            <person name="Felder M."/>
            <person name="Thangavelu M."/>
            <person name="Johnson D."/>
            <person name="Knights A."/>
            <person name="Loulseged H."/>
            <person name="Mungall K.L."/>
            <person name="Oliver K."/>
            <person name="Price C."/>
            <person name="Quail M.A."/>
            <person name="Urushihara H."/>
            <person name="Hernandez J."/>
            <person name="Rabbinowitsch E."/>
            <person name="Steffen D."/>
            <person name="Sanders M."/>
            <person name="Ma J."/>
            <person name="Kohara Y."/>
            <person name="Sharp S."/>
            <person name="Simmonds M.N."/>
            <person name="Spiegler S."/>
            <person name="Tivey A."/>
            <person name="Sugano S."/>
            <person name="White B."/>
            <person name="Walker D."/>
            <person name="Woodward J.R."/>
            <person name="Winckler T."/>
            <person name="Tanaka Y."/>
            <person name="Shaulsky G."/>
            <person name="Schleicher M."/>
            <person name="Weinstock G.M."/>
            <person name="Rosenthal A."/>
            <person name="Cox E.C."/>
            <person name="Chisholm R.L."/>
            <person name="Gibbs R.A."/>
            <person name="Loomis W.F."/>
            <person name="Platzer M."/>
            <person name="Kay R.R."/>
            <person name="Williams J.G."/>
            <person name="Dear P.H."/>
            <person name="Noegel A.A."/>
            <person name="Barrell B.G."/>
            <person name="Kuspa A."/>
        </authorList>
    </citation>
    <scope>NUCLEOTIDE SEQUENCE [LARGE SCALE GENOMIC DNA]</scope>
    <source>
        <strain>AX4</strain>
    </source>
</reference>
<gene>
    <name type="primary">uprt</name>
    <name type="ORF">DDB_G0267560</name>
</gene>
<evidence type="ECO:0000250" key="1"/>
<evidence type="ECO:0000250" key="2">
    <source>
        <dbReference type="UniProtKB" id="Q26998"/>
    </source>
</evidence>
<evidence type="ECO:0000305" key="3"/>
<dbReference type="EC" id="2.4.2.9"/>
<dbReference type="EMBL" id="AAFI02000003">
    <property type="protein sequence ID" value="EAL73233.1"/>
    <property type="molecule type" value="Genomic_DNA"/>
</dbReference>
<dbReference type="RefSeq" id="XP_647128.1">
    <property type="nucleotide sequence ID" value="XM_642036.1"/>
</dbReference>
<dbReference type="SMR" id="Q55GQ6"/>
<dbReference type="FunCoup" id="Q55GQ6">
    <property type="interactions" value="72"/>
</dbReference>
<dbReference type="STRING" id="44689.Q55GQ6"/>
<dbReference type="PaxDb" id="44689-DDB0230206"/>
<dbReference type="EnsemblProtists" id="EAL73233">
    <property type="protein sequence ID" value="EAL73233"/>
    <property type="gene ID" value="DDB_G0267560"/>
</dbReference>
<dbReference type="GeneID" id="8615932"/>
<dbReference type="KEGG" id="ddi:DDB_G0267560"/>
<dbReference type="dictyBase" id="DDB_G0267560">
    <property type="gene designation" value="uprt"/>
</dbReference>
<dbReference type="VEuPathDB" id="AmoebaDB:DDB_G0267560"/>
<dbReference type="eggNOG" id="KOG4203">
    <property type="taxonomic scope" value="Eukaryota"/>
</dbReference>
<dbReference type="HOGENOM" id="CLU_067096_1_1_1"/>
<dbReference type="InParanoid" id="Q55GQ6"/>
<dbReference type="OMA" id="KHKIGLM"/>
<dbReference type="PhylomeDB" id="Q55GQ6"/>
<dbReference type="UniPathway" id="UPA00574">
    <property type="reaction ID" value="UER00636"/>
</dbReference>
<dbReference type="PRO" id="PR:Q55GQ6"/>
<dbReference type="Proteomes" id="UP000002195">
    <property type="component" value="Chromosome 1"/>
</dbReference>
<dbReference type="GO" id="GO:0005525">
    <property type="term" value="F:GTP binding"/>
    <property type="evidence" value="ECO:0007669"/>
    <property type="project" value="UniProtKB-KW"/>
</dbReference>
<dbReference type="GO" id="GO:0004845">
    <property type="term" value="F:uracil phosphoribosyltransferase activity"/>
    <property type="evidence" value="ECO:0000250"/>
    <property type="project" value="dictyBase"/>
</dbReference>
<dbReference type="GO" id="GO:0008655">
    <property type="term" value="P:pyrimidine-containing compound salvage"/>
    <property type="evidence" value="ECO:0000250"/>
    <property type="project" value="dictyBase"/>
</dbReference>
<dbReference type="GO" id="GO:0044206">
    <property type="term" value="P:UMP salvage"/>
    <property type="evidence" value="ECO:0007669"/>
    <property type="project" value="UniProtKB-UniPathway"/>
</dbReference>
<dbReference type="CDD" id="cd06223">
    <property type="entry name" value="PRTases_typeI"/>
    <property type="match status" value="1"/>
</dbReference>
<dbReference type="FunFam" id="3.40.50.2020:FF:000023">
    <property type="entry name" value="Probable uracil phosphoribosyltransferase"/>
    <property type="match status" value="1"/>
</dbReference>
<dbReference type="Gene3D" id="3.40.50.2020">
    <property type="match status" value="1"/>
</dbReference>
<dbReference type="InterPro" id="IPR000836">
    <property type="entry name" value="PRibTrfase_dom"/>
</dbReference>
<dbReference type="InterPro" id="IPR029057">
    <property type="entry name" value="PRTase-like"/>
</dbReference>
<dbReference type="NCBIfam" id="NF001097">
    <property type="entry name" value="PRK00129.1"/>
    <property type="match status" value="1"/>
</dbReference>
<dbReference type="Pfam" id="PF14681">
    <property type="entry name" value="UPRTase"/>
    <property type="match status" value="1"/>
</dbReference>
<dbReference type="SUPFAM" id="SSF53271">
    <property type="entry name" value="PRTase-like"/>
    <property type="match status" value="1"/>
</dbReference>